<keyword id="KW-1003">Cell membrane</keyword>
<keyword id="KW-0472">Membrane</keyword>
<keyword id="KW-1185">Reference proteome</keyword>
<proteinExistence type="inferred from homology"/>
<protein>
    <recommendedName>
        <fullName>Respiratory growth induced protein 1</fullName>
    </recommendedName>
</protein>
<comment type="function">
    <text evidence="1">Involved in the control of energetic metabolism and significantly contribute to cell fitness, especially under respiratory growth conditions.</text>
</comment>
<comment type="subcellular location">
    <subcellularLocation>
        <location evidence="1">Cell membrane</location>
        <topology evidence="1">Peripheral membrane protein</topology>
    </subcellularLocation>
</comment>
<comment type="similarity">
    <text evidence="3">Belongs to the RGI1 family.</text>
</comment>
<reference key="1">
    <citation type="journal article" date="2007" name="Nat. Biotechnol.">
        <title>Genome sequence of the lignocellulose-bioconverting and xylose-fermenting yeast Pichia stipitis.</title>
        <authorList>
            <person name="Jeffries T.W."/>
            <person name="Grigoriev I.V."/>
            <person name="Grimwood J."/>
            <person name="Laplaza J.M."/>
            <person name="Aerts A."/>
            <person name="Salamov A."/>
            <person name="Schmutz J."/>
            <person name="Lindquist E."/>
            <person name="Dehal P."/>
            <person name="Shapiro H."/>
            <person name="Jin Y.-S."/>
            <person name="Passoth V."/>
            <person name="Richardson P.M."/>
        </authorList>
    </citation>
    <scope>NUCLEOTIDE SEQUENCE [LARGE SCALE GENOMIC DNA]</scope>
    <source>
        <strain>ATCC 58785 / CBS 6054 / NBRC 10063 / NRRL Y-11545</strain>
    </source>
</reference>
<evidence type="ECO:0000250" key="1"/>
<evidence type="ECO:0000256" key="2">
    <source>
        <dbReference type="SAM" id="MobiDB-lite"/>
    </source>
</evidence>
<evidence type="ECO:0000305" key="3"/>
<accession>A3LTT0</accession>
<gene>
    <name type="primary">RGI1</name>
    <name type="ORF">PICST_83546</name>
</gene>
<organism>
    <name type="scientific">Scheffersomyces stipitis (strain ATCC 58785 / CBS 6054 / NBRC 10063 / NRRL Y-11545)</name>
    <name type="common">Yeast</name>
    <name type="synonym">Pichia stipitis</name>
    <dbReference type="NCBI Taxonomy" id="322104"/>
    <lineage>
        <taxon>Eukaryota</taxon>
        <taxon>Fungi</taxon>
        <taxon>Dikarya</taxon>
        <taxon>Ascomycota</taxon>
        <taxon>Saccharomycotina</taxon>
        <taxon>Pichiomycetes</taxon>
        <taxon>Debaryomycetaceae</taxon>
        <taxon>Scheffersomyces</taxon>
    </lineage>
</organism>
<sequence length="200" mass="23485">MARAKKSKDSQPLDLNNCQPLEHLQPVPKTRSASIISVESTDSEGGVVEVLAPPQVREFDDLTAFEAFVRDETWDNDFDYFHGRLNYYPPFIMKECHDNLDKIKPTANKNSRKFKRNLQHHVARHLIKDLEKCCGYELHMDKFDTIETPNRITWKFKDESDHGFSKEEEDEYNRHWRLELSVSCNNENPMVEVDYKAIPI</sequence>
<name>RGI1_PICST</name>
<feature type="chain" id="PRO_0000402291" description="Respiratory growth induced protein 1">
    <location>
        <begin position="1"/>
        <end position="200"/>
    </location>
</feature>
<feature type="region of interest" description="Disordered" evidence="2">
    <location>
        <begin position="1"/>
        <end position="26"/>
    </location>
</feature>
<dbReference type="EMBL" id="CP000498">
    <property type="protein sequence ID" value="ABN66469.1"/>
    <property type="molecule type" value="Genomic_DNA"/>
</dbReference>
<dbReference type="RefSeq" id="XP_001384498.1">
    <property type="nucleotide sequence ID" value="XM_001384461.1"/>
</dbReference>
<dbReference type="SMR" id="A3LTT0"/>
<dbReference type="FunCoup" id="A3LTT0">
    <property type="interactions" value="98"/>
</dbReference>
<dbReference type="STRING" id="322104.A3LTT0"/>
<dbReference type="GeneID" id="4839009"/>
<dbReference type="KEGG" id="pic:PICST_83546"/>
<dbReference type="eggNOG" id="ENOG502S6JA">
    <property type="taxonomic scope" value="Eukaryota"/>
</dbReference>
<dbReference type="HOGENOM" id="CLU_118207_0_0_1"/>
<dbReference type="InParanoid" id="A3LTT0"/>
<dbReference type="OMA" id="HLKYYPP"/>
<dbReference type="OrthoDB" id="4082176at2759"/>
<dbReference type="Proteomes" id="UP000002258">
    <property type="component" value="Chromosome 4"/>
</dbReference>
<dbReference type="GO" id="GO:0005886">
    <property type="term" value="C:plasma membrane"/>
    <property type="evidence" value="ECO:0007669"/>
    <property type="project" value="UniProtKB-SubCell"/>
</dbReference>
<dbReference type="GO" id="GO:0006112">
    <property type="term" value="P:energy reserve metabolic process"/>
    <property type="evidence" value="ECO:0007669"/>
    <property type="project" value="InterPro"/>
</dbReference>
<dbReference type="Gene3D" id="3.40.1000.40">
    <property type="entry name" value="Respiratory growth induced protein 1"/>
    <property type="match status" value="1"/>
</dbReference>
<dbReference type="InterPro" id="IPR022554">
    <property type="entry name" value="RGI1"/>
</dbReference>
<dbReference type="InterPro" id="IPR038235">
    <property type="entry name" value="RGI1_sf"/>
</dbReference>
<dbReference type="Pfam" id="PF10843">
    <property type="entry name" value="RGI1"/>
    <property type="match status" value="1"/>
</dbReference>